<protein>
    <recommendedName>
        <fullName evidence="1">Large ribosomal subunit protein bL25</fullName>
    </recommendedName>
    <alternativeName>
        <fullName evidence="2">50S ribosomal protein L25</fullName>
    </alternativeName>
    <alternativeName>
        <fullName evidence="1">General stress protein CTC</fullName>
    </alternativeName>
</protein>
<organism>
    <name type="scientific">Lawsonia intracellularis (strain PHE/MN1-00)</name>
    <dbReference type="NCBI Taxonomy" id="363253"/>
    <lineage>
        <taxon>Bacteria</taxon>
        <taxon>Pseudomonadati</taxon>
        <taxon>Thermodesulfobacteriota</taxon>
        <taxon>Desulfovibrionia</taxon>
        <taxon>Desulfovibrionales</taxon>
        <taxon>Desulfovibrionaceae</taxon>
        <taxon>Lawsonia</taxon>
    </lineage>
</organism>
<keyword id="KW-1185">Reference proteome</keyword>
<keyword id="KW-0687">Ribonucleoprotein</keyword>
<keyword id="KW-0689">Ribosomal protein</keyword>
<keyword id="KW-0694">RNA-binding</keyword>
<keyword id="KW-0699">rRNA-binding</keyword>
<sequence length="197" mass="22055">MDNLKTLVVQKRLDLGKGPNRRLHKKNLIPGIFYTSSGKNIPIQLPELPFTKIFSEVGRTTVFNLKIESDKENITHPVIIWELQYYPVKNRFMHVDLYGVELNKPIKIVVPLEFTGTAKGTKVGGKLETYREQLTLIANPLDIPSKITLDISDLDIGKSIYVADLKLPEGVKTSYDTNYAIVSVIMPGGNTATEQEG</sequence>
<evidence type="ECO:0000255" key="1">
    <source>
        <dbReference type="HAMAP-Rule" id="MF_01334"/>
    </source>
</evidence>
<evidence type="ECO:0000305" key="2"/>
<dbReference type="EMBL" id="AM180252">
    <property type="protein sequence ID" value="CAJ54791.1"/>
    <property type="molecule type" value="Genomic_DNA"/>
</dbReference>
<dbReference type="RefSeq" id="WP_011526820.1">
    <property type="nucleotide sequence ID" value="NC_008011.1"/>
</dbReference>
<dbReference type="SMR" id="Q1MQD6"/>
<dbReference type="STRING" id="363253.LI0737"/>
<dbReference type="KEGG" id="lip:LI0737"/>
<dbReference type="eggNOG" id="COG1825">
    <property type="taxonomic scope" value="Bacteria"/>
</dbReference>
<dbReference type="HOGENOM" id="CLU_075939_2_0_7"/>
<dbReference type="OrthoDB" id="9786489at2"/>
<dbReference type="Proteomes" id="UP000002430">
    <property type="component" value="Chromosome"/>
</dbReference>
<dbReference type="GO" id="GO:0022625">
    <property type="term" value="C:cytosolic large ribosomal subunit"/>
    <property type="evidence" value="ECO:0007669"/>
    <property type="project" value="TreeGrafter"/>
</dbReference>
<dbReference type="GO" id="GO:0008097">
    <property type="term" value="F:5S rRNA binding"/>
    <property type="evidence" value="ECO:0007669"/>
    <property type="project" value="InterPro"/>
</dbReference>
<dbReference type="GO" id="GO:0003735">
    <property type="term" value="F:structural constituent of ribosome"/>
    <property type="evidence" value="ECO:0007669"/>
    <property type="project" value="InterPro"/>
</dbReference>
<dbReference type="GO" id="GO:0006412">
    <property type="term" value="P:translation"/>
    <property type="evidence" value="ECO:0007669"/>
    <property type="project" value="UniProtKB-UniRule"/>
</dbReference>
<dbReference type="CDD" id="cd00495">
    <property type="entry name" value="Ribosomal_L25_TL5_CTC"/>
    <property type="match status" value="1"/>
</dbReference>
<dbReference type="Gene3D" id="2.170.120.20">
    <property type="entry name" value="Ribosomal protein L25, beta domain"/>
    <property type="match status" value="1"/>
</dbReference>
<dbReference type="Gene3D" id="2.40.240.10">
    <property type="entry name" value="Ribosomal Protein L25, Chain P"/>
    <property type="match status" value="1"/>
</dbReference>
<dbReference type="HAMAP" id="MF_01334">
    <property type="entry name" value="Ribosomal_bL25_CTC"/>
    <property type="match status" value="1"/>
</dbReference>
<dbReference type="InterPro" id="IPR020056">
    <property type="entry name" value="Rbsml_bL25/Gln-tRNA_synth_N"/>
</dbReference>
<dbReference type="InterPro" id="IPR011035">
    <property type="entry name" value="Ribosomal_bL25/Gln-tRNA_synth"/>
</dbReference>
<dbReference type="InterPro" id="IPR020057">
    <property type="entry name" value="Ribosomal_bL25_b-dom"/>
</dbReference>
<dbReference type="InterPro" id="IPR037121">
    <property type="entry name" value="Ribosomal_bL25_C"/>
</dbReference>
<dbReference type="InterPro" id="IPR001021">
    <property type="entry name" value="Ribosomal_bL25_long"/>
</dbReference>
<dbReference type="InterPro" id="IPR029751">
    <property type="entry name" value="Ribosomal_L25_dom"/>
</dbReference>
<dbReference type="InterPro" id="IPR020930">
    <property type="entry name" value="Ribosomal_uL5_bac-type"/>
</dbReference>
<dbReference type="NCBIfam" id="TIGR00731">
    <property type="entry name" value="bL25_bact_ctc"/>
    <property type="match status" value="1"/>
</dbReference>
<dbReference type="NCBIfam" id="NF004135">
    <property type="entry name" value="PRK05618.3-1"/>
    <property type="match status" value="1"/>
</dbReference>
<dbReference type="PANTHER" id="PTHR33284">
    <property type="entry name" value="RIBOSOMAL PROTEIN L25/GLN-TRNA SYNTHETASE, ANTI-CODON-BINDING DOMAIN-CONTAINING PROTEIN"/>
    <property type="match status" value="1"/>
</dbReference>
<dbReference type="PANTHER" id="PTHR33284:SF1">
    <property type="entry name" value="RIBOSOMAL PROTEIN L25_GLN-TRNA SYNTHETASE, ANTI-CODON-BINDING DOMAIN-CONTAINING PROTEIN"/>
    <property type="match status" value="1"/>
</dbReference>
<dbReference type="Pfam" id="PF01386">
    <property type="entry name" value="Ribosomal_L25p"/>
    <property type="match status" value="1"/>
</dbReference>
<dbReference type="Pfam" id="PF14693">
    <property type="entry name" value="Ribosomal_TL5_C"/>
    <property type="match status" value="1"/>
</dbReference>
<dbReference type="SUPFAM" id="SSF50715">
    <property type="entry name" value="Ribosomal protein L25-like"/>
    <property type="match status" value="1"/>
</dbReference>
<feature type="chain" id="PRO_1000052897" description="Large ribosomal subunit protein bL25">
    <location>
        <begin position="1"/>
        <end position="197"/>
    </location>
</feature>
<reference key="1">
    <citation type="submission" date="2005-11" db="EMBL/GenBank/DDBJ databases">
        <title>The complete genome sequence of Lawsonia intracellularis: the causative agent of proliferative enteropathy.</title>
        <authorList>
            <person name="Kaur K."/>
            <person name="Zhang Q."/>
            <person name="Beckler D."/>
            <person name="Munir S."/>
            <person name="Li L."/>
            <person name="Kinsley K."/>
            <person name="Herron L."/>
            <person name="Peterson A."/>
            <person name="May B."/>
            <person name="Singh S."/>
            <person name="Gebhart C."/>
            <person name="Kapur V."/>
        </authorList>
    </citation>
    <scope>NUCLEOTIDE SEQUENCE [LARGE SCALE GENOMIC DNA]</scope>
    <source>
        <strain>PHE/MN1-00</strain>
    </source>
</reference>
<name>RL25_LAWIP</name>
<proteinExistence type="inferred from homology"/>
<accession>Q1MQD6</accession>
<comment type="function">
    <text evidence="1">This is one of the proteins that binds to the 5S RNA in the ribosome where it forms part of the central protuberance.</text>
</comment>
<comment type="subunit">
    <text evidence="1">Part of the 50S ribosomal subunit; part of the 5S rRNA/L5/L18/L25 subcomplex. Contacts the 5S rRNA. Binds to the 5S rRNA independently of L5 and L18.</text>
</comment>
<comment type="similarity">
    <text evidence="1">Belongs to the bacterial ribosomal protein bL25 family. CTC subfamily.</text>
</comment>
<gene>
    <name evidence="1" type="primary">rplY</name>
    <name evidence="1" type="synonym">ctc</name>
    <name type="ordered locus">LI0737</name>
</gene>